<sequence length="76" mass="8691">MKNILFRINELSKKEKATGLTVDEKQEQQMLRQNYTETFRGSLDSILLNTKIVDQNGLNVTPAALQDAQIRLKLSK</sequence>
<feature type="chain" id="PRO_0000094956" description="UPF0291 protein BC_1827">
    <location>
        <begin position="1"/>
        <end position="76"/>
    </location>
</feature>
<keyword id="KW-0963">Cytoplasm</keyword>
<keyword id="KW-1185">Reference proteome</keyword>
<gene>
    <name type="ordered locus">BC_1827</name>
</gene>
<evidence type="ECO:0000255" key="1">
    <source>
        <dbReference type="HAMAP-Rule" id="MF_01103"/>
    </source>
</evidence>
<organism>
    <name type="scientific">Bacillus cereus (strain ATCC 14579 / DSM 31 / CCUG 7414 / JCM 2152 / NBRC 15305 / NCIMB 9373 / NCTC 2599 / NRRL B-3711)</name>
    <dbReference type="NCBI Taxonomy" id="226900"/>
    <lineage>
        <taxon>Bacteria</taxon>
        <taxon>Bacillati</taxon>
        <taxon>Bacillota</taxon>
        <taxon>Bacilli</taxon>
        <taxon>Bacillales</taxon>
        <taxon>Bacillaceae</taxon>
        <taxon>Bacillus</taxon>
        <taxon>Bacillus cereus group</taxon>
    </lineage>
</organism>
<name>Y1827_BACCR</name>
<accession>Q813Q5</accession>
<dbReference type="EMBL" id="AE016877">
    <property type="protein sequence ID" value="AAP08801.1"/>
    <property type="molecule type" value="Genomic_DNA"/>
</dbReference>
<dbReference type="RefSeq" id="NP_831600.1">
    <property type="nucleotide sequence ID" value="NC_004722.1"/>
</dbReference>
<dbReference type="RefSeq" id="WP_000789782.1">
    <property type="nucleotide sequence ID" value="NZ_CP138336.1"/>
</dbReference>
<dbReference type="SMR" id="Q813Q5"/>
<dbReference type="STRING" id="226900.BC_1827"/>
<dbReference type="KEGG" id="bce:BC1827"/>
<dbReference type="PATRIC" id="fig|226900.8.peg.1818"/>
<dbReference type="HOGENOM" id="CLU_173137_0_2_9"/>
<dbReference type="OrthoDB" id="390105at2"/>
<dbReference type="Proteomes" id="UP000001417">
    <property type="component" value="Chromosome"/>
</dbReference>
<dbReference type="GO" id="GO:0005737">
    <property type="term" value="C:cytoplasm"/>
    <property type="evidence" value="ECO:0007669"/>
    <property type="project" value="UniProtKB-SubCell"/>
</dbReference>
<dbReference type="Gene3D" id="1.10.287.540">
    <property type="entry name" value="Helix hairpin bin"/>
    <property type="match status" value="1"/>
</dbReference>
<dbReference type="HAMAP" id="MF_01103">
    <property type="entry name" value="UPF0291"/>
    <property type="match status" value="1"/>
</dbReference>
<dbReference type="InterPro" id="IPR009242">
    <property type="entry name" value="DUF896"/>
</dbReference>
<dbReference type="NCBIfam" id="NF002452">
    <property type="entry name" value="PRK01631.1"/>
    <property type="match status" value="1"/>
</dbReference>
<dbReference type="PANTHER" id="PTHR37300:SF2">
    <property type="entry name" value="UPF0291 PROTEIN BC_1827"/>
    <property type="match status" value="1"/>
</dbReference>
<dbReference type="PANTHER" id="PTHR37300">
    <property type="entry name" value="UPF0291 PROTEIN CBO2609/CLC_2481"/>
    <property type="match status" value="1"/>
</dbReference>
<dbReference type="Pfam" id="PF05979">
    <property type="entry name" value="DUF896"/>
    <property type="match status" value="1"/>
</dbReference>
<dbReference type="SUPFAM" id="SSF158221">
    <property type="entry name" value="YnzC-like"/>
    <property type="match status" value="1"/>
</dbReference>
<proteinExistence type="inferred from homology"/>
<reference key="1">
    <citation type="journal article" date="2003" name="Nature">
        <title>Genome sequence of Bacillus cereus and comparative analysis with Bacillus anthracis.</title>
        <authorList>
            <person name="Ivanova N."/>
            <person name="Sorokin A."/>
            <person name="Anderson I."/>
            <person name="Galleron N."/>
            <person name="Candelon B."/>
            <person name="Kapatral V."/>
            <person name="Bhattacharyya A."/>
            <person name="Reznik G."/>
            <person name="Mikhailova N."/>
            <person name="Lapidus A."/>
            <person name="Chu L."/>
            <person name="Mazur M."/>
            <person name="Goltsman E."/>
            <person name="Larsen N."/>
            <person name="D'Souza M."/>
            <person name="Walunas T."/>
            <person name="Grechkin Y."/>
            <person name="Pusch G."/>
            <person name="Haselkorn R."/>
            <person name="Fonstein M."/>
            <person name="Ehrlich S.D."/>
            <person name="Overbeek R."/>
            <person name="Kyrpides N.C."/>
        </authorList>
    </citation>
    <scope>NUCLEOTIDE SEQUENCE [LARGE SCALE GENOMIC DNA]</scope>
    <source>
        <strain>ATCC 14579 / DSM 31 / CCUG 7414 / JCM 2152 / NBRC 15305 / NCIMB 9373 / NCTC 2599 / NRRL B-3711</strain>
    </source>
</reference>
<protein>
    <recommendedName>
        <fullName evidence="1">UPF0291 protein BC_1827</fullName>
    </recommendedName>
</protein>
<comment type="subcellular location">
    <subcellularLocation>
        <location evidence="1">Cytoplasm</location>
    </subcellularLocation>
</comment>
<comment type="similarity">
    <text evidence="1">Belongs to the UPF0291 family.</text>
</comment>